<keyword id="KW-0002">3D-structure</keyword>
<keyword id="KW-0025">Alternative splicing</keyword>
<keyword id="KW-1003">Cell membrane</keyword>
<keyword id="KW-0325">Glycoprotein</keyword>
<keyword id="KW-0378">Hydrolase</keyword>
<keyword id="KW-0472">Membrane</keyword>
<keyword id="KW-0597">Phosphoprotein</keyword>
<keyword id="KW-0904">Protein phosphatase</keyword>
<keyword id="KW-1185">Reference proteome</keyword>
<keyword id="KW-0677">Repeat</keyword>
<keyword id="KW-0732">Signal</keyword>
<keyword id="KW-0770">Synapse</keyword>
<keyword id="KW-0812">Transmembrane</keyword>
<keyword id="KW-1133">Transmembrane helix</keyword>
<sequence length="1273" mass="143269">MYLWLKLLAFSLALLGPEVFVTGQGTTDDGLDTTEIVLLPQTDPLPARTTEFTPPSISERGNGSSETTYLPGFSSTLMPHLTPQPDSQTPSARGADTQTLSSQADLTTLTAAPSGETDPPGVPEESTVPETFPGGTPILARNSTAPSPTHTSNVSTTDISSGANLTTPAPSTLGFASNTTTSTEIATPQTKPSCDEKFGNVTVRYIYDDSSKNFNANLEGDKKPKCEYTDCEKELKNLPECSQKNVTLSNGSCTPDKIINLDVPPGTHNFNLTNCTPDIEANTSICLEWKIKNKFTCDIQKISYNFRCTPEMKTFALDKHGTLWLHNLTVRTNYTCAAEVLYNNVILLKQDRRVQTDFGTPEMLPHVQCKNSTNSTTLVSWAEPASKHHGYILCYKKTPSEKCENLANDVNSFEVKNLRPYTEYTVSLFAYVIGRVQRNGPAKDCNFRTKAARPGKVNGMKTSRASDNSINVTCNSPYEINGPEARYILEVKSGGSLVKTFNQSTCKFVVDNLYYSTDYEFLVYFYNGEYLGDPEIKPQSTSYNSKALIIFLVFLIIVTSIALLVVLYKIYDLRKKRSSNLDEQQELVERDEEKQLINVDPIHSDLLLETYKRKIADEGRLFLAEFQSIPRVFSKFPIKDARKSQNQNKNRYVDILPYDYNRVELSEINGDAGSTYINASYIDGFKEPRKYIAAQGPRDETVDDFWKMIWEQKATVIVMVTRCEEGNRNKCAEYWPCMEEGTRTFRDVVVTINDHKRCPDYIIQKLSIAHKKEKATGREVTHIQFTSWPDHGVPEDPHLLLKLRRRVNAFSNFFSGPIVVHCSAGVGRTGTYIGIDAMLESLEAEGKVDVYGYVVNLRRQRCLMVQVEAQYILIHQALVEYNQFGETEVNLSELHSCLQNLKKRDPPSDPSPLEAEYQRLPSYRSWRTQHIGNQEENKKKNRSSNVVPYDFNRVPLKHELEMSKESEAESDESSDEDSDSEETSKYINASFVMSYWKPEMMIAAQGPLKETIGDFWQMIFQRKVKVIVMLTELMSGDQEVCAQYWGEGKQTYGDMEVMLKDTNKSSAYILRAFELRHSKRKEPRTVYQYQCTTWKGEELPAEPKDLVTLIQNIKQKLPKSGSEGMKYHKHASILVHCRDGSQQTGLFCALFNLLESAETEDVVDVFQVVKSLRKARPGMVGSFEQYQFLYDIMASIYPTQNGQVKKANSQDKIEFHNEVDGAKQDANCVQPADPLNKAQEDSKEVGASEPASGSEEPEHSANGPMSPALTPSS</sequence>
<dbReference type="EC" id="3.1.3.48"/>
<dbReference type="EMBL" id="CB793707">
    <property type="status" value="NOT_ANNOTATED_CDS"/>
    <property type="molecule type" value="mRNA"/>
</dbReference>
<dbReference type="EMBL" id="Y00065">
    <property type="protein sequence ID" value="CAA68272.1"/>
    <property type="molecule type" value="mRNA"/>
</dbReference>
<dbReference type="EMBL" id="Y00065">
    <property type="protein sequence ID" value="CAA68273.1"/>
    <property type="molecule type" value="mRNA"/>
</dbReference>
<dbReference type="EMBL" id="Y00065">
    <property type="protein sequence ID" value="CAA68274.1"/>
    <property type="molecule type" value="mRNA"/>
</dbReference>
<dbReference type="EMBL" id="Y00065">
    <property type="protein sequence ID" value="CAA68275.1"/>
    <property type="molecule type" value="mRNA"/>
</dbReference>
<dbReference type="EMBL" id="M25820">
    <property type="protein sequence ID" value="AAA41518.1"/>
    <property type="molecule type" value="mRNA"/>
</dbReference>
<dbReference type="EMBL" id="M25821">
    <property type="protein sequence ID" value="AAA41519.1"/>
    <property type="molecule type" value="mRNA"/>
</dbReference>
<dbReference type="EMBL" id="M25822">
    <property type="protein sequence ID" value="AAA41520.1"/>
    <property type="molecule type" value="mRNA"/>
</dbReference>
<dbReference type="EMBL" id="M25823">
    <property type="protein sequence ID" value="AAA41521.1"/>
    <property type="molecule type" value="mRNA"/>
</dbReference>
<dbReference type="PIR" id="A45854">
    <property type="entry name" value="A45854"/>
</dbReference>
<dbReference type="RefSeq" id="NP_001103357.1">
    <molecule id="P04157-4"/>
    <property type="nucleotide sequence ID" value="NM_001109887.2"/>
</dbReference>
<dbReference type="RefSeq" id="NP_001103358.1">
    <molecule id="P04157-5"/>
    <property type="nucleotide sequence ID" value="NM_001109888.2"/>
</dbReference>
<dbReference type="RefSeq" id="NP_001103359.1">
    <molecule id="P04157-3"/>
    <property type="nucleotide sequence ID" value="NM_001109889.2"/>
</dbReference>
<dbReference type="RefSeq" id="NP_001103360.1">
    <molecule id="P04157-2"/>
    <property type="nucleotide sequence ID" value="NM_001109890.2"/>
</dbReference>
<dbReference type="RefSeq" id="NP_612516.2">
    <molecule id="P04157-1"/>
    <property type="nucleotide sequence ID" value="NM_138507.3"/>
</dbReference>
<dbReference type="RefSeq" id="XP_006249972.1">
    <property type="nucleotide sequence ID" value="XM_006249910.2"/>
</dbReference>
<dbReference type="PDB" id="5FN8">
    <property type="method" value="X-ray"/>
    <property type="resolution" value="2.45 A"/>
    <property type="chains" value="A/B=357-546"/>
</dbReference>
<dbReference type="PDBsum" id="5FN8"/>
<dbReference type="SMR" id="P04157"/>
<dbReference type="BioGRID" id="246829">
    <property type="interactions" value="1"/>
</dbReference>
<dbReference type="FunCoup" id="P04157">
    <property type="interactions" value="809"/>
</dbReference>
<dbReference type="IntAct" id="P04157">
    <property type="interactions" value="2"/>
</dbReference>
<dbReference type="MINT" id="P04157"/>
<dbReference type="STRING" id="10116.ENSRNOP00000063859"/>
<dbReference type="GlyCosmos" id="P04157">
    <property type="glycosylation" value="16 sites, No reported glycans"/>
</dbReference>
<dbReference type="GlyGen" id="P04157">
    <property type="glycosylation" value="16 sites"/>
</dbReference>
<dbReference type="iPTMnet" id="P04157"/>
<dbReference type="PhosphoSitePlus" id="P04157"/>
<dbReference type="PaxDb" id="10116-ENSRNOP00000063859"/>
<dbReference type="Ensembl" id="ENSRNOT00000060292.5">
    <molecule id="P04157-3"/>
    <property type="protein sequence ID" value="ENSRNOP00000057042.2"/>
    <property type="gene ID" value="ENSRNOG00000000655.9"/>
</dbReference>
<dbReference type="Ensembl" id="ENSRNOT00000064785.4">
    <molecule id="P04157-1"/>
    <property type="protein sequence ID" value="ENSRNOP00000063859.1"/>
    <property type="gene ID" value="ENSRNOG00000000655.9"/>
</dbReference>
<dbReference type="GeneID" id="24699"/>
<dbReference type="KEGG" id="rno:24699"/>
<dbReference type="UCSC" id="RGD:3451">
    <molecule id="P04157-1"/>
    <property type="organism name" value="rat"/>
</dbReference>
<dbReference type="AGR" id="RGD:3451"/>
<dbReference type="CTD" id="5788"/>
<dbReference type="RGD" id="3451">
    <property type="gene designation" value="Ptprc"/>
</dbReference>
<dbReference type="eggNOG" id="KOG4228">
    <property type="taxonomic scope" value="Eukaryota"/>
</dbReference>
<dbReference type="GeneTree" id="ENSGT00940000159457"/>
<dbReference type="HOGENOM" id="CLU_001645_2_1_1"/>
<dbReference type="InParanoid" id="P04157"/>
<dbReference type="OMA" id="ILHYIIH"/>
<dbReference type="OrthoDB" id="70004at9989"/>
<dbReference type="PhylomeDB" id="P04157"/>
<dbReference type="TreeFam" id="TF351829"/>
<dbReference type="Reactome" id="R-RNO-202427">
    <property type="pathway name" value="Phosphorylation of CD3 and TCR zeta chains"/>
</dbReference>
<dbReference type="Reactome" id="R-RNO-416700">
    <property type="pathway name" value="Other semaphorin interactions"/>
</dbReference>
<dbReference type="Reactome" id="R-RNO-6798695">
    <property type="pathway name" value="Neutrophil degranulation"/>
</dbReference>
<dbReference type="PRO" id="PR:P04157"/>
<dbReference type="Proteomes" id="UP000002494">
    <property type="component" value="Chromosome 13"/>
</dbReference>
<dbReference type="Bgee" id="ENSRNOG00000000655">
    <property type="expression patterns" value="Expressed in spleen and 19 other cell types or tissues"/>
</dbReference>
<dbReference type="GO" id="GO:0032059">
    <property type="term" value="C:bleb"/>
    <property type="evidence" value="ECO:0000266"/>
    <property type="project" value="RGD"/>
</dbReference>
<dbReference type="GO" id="GO:0071944">
    <property type="term" value="C:cell periphery"/>
    <property type="evidence" value="ECO:0000266"/>
    <property type="project" value="RGD"/>
</dbReference>
<dbReference type="GO" id="GO:0009986">
    <property type="term" value="C:cell surface"/>
    <property type="evidence" value="ECO:0000314"/>
    <property type="project" value="RGD"/>
</dbReference>
<dbReference type="GO" id="GO:0009898">
    <property type="term" value="C:cytoplasmic side of plasma membrane"/>
    <property type="evidence" value="ECO:0000304"/>
    <property type="project" value="RGD"/>
</dbReference>
<dbReference type="GO" id="GO:0009897">
    <property type="term" value="C:external side of plasma membrane"/>
    <property type="evidence" value="ECO:0000266"/>
    <property type="project" value="RGD"/>
</dbReference>
<dbReference type="GO" id="GO:0005925">
    <property type="term" value="C:focal adhesion"/>
    <property type="evidence" value="ECO:0000250"/>
    <property type="project" value="UniProtKB"/>
</dbReference>
<dbReference type="GO" id="GO:0098857">
    <property type="term" value="C:membrane microdomain"/>
    <property type="evidence" value="ECO:0000266"/>
    <property type="project" value="RGD"/>
</dbReference>
<dbReference type="GO" id="GO:0045121">
    <property type="term" value="C:membrane raft"/>
    <property type="evidence" value="ECO:0000266"/>
    <property type="project" value="RGD"/>
</dbReference>
<dbReference type="GO" id="GO:0005886">
    <property type="term" value="C:plasma membrane"/>
    <property type="evidence" value="ECO:0000314"/>
    <property type="project" value="UniProtKB"/>
</dbReference>
<dbReference type="GO" id="GO:0045202">
    <property type="term" value="C:synapse"/>
    <property type="evidence" value="ECO:0007669"/>
    <property type="project" value="UniProtKB-SubCell"/>
</dbReference>
<dbReference type="GO" id="GO:0030506">
    <property type="term" value="F:ankyrin binding"/>
    <property type="evidence" value="ECO:0000266"/>
    <property type="project" value="RGD"/>
</dbReference>
<dbReference type="GO" id="GO:0043395">
    <property type="term" value="F:heparan sulfate proteoglycan binding"/>
    <property type="evidence" value="ECO:0000266"/>
    <property type="project" value="RGD"/>
</dbReference>
<dbReference type="GO" id="GO:0008201">
    <property type="term" value="F:heparin binding"/>
    <property type="evidence" value="ECO:0000266"/>
    <property type="project" value="RGD"/>
</dbReference>
<dbReference type="GO" id="GO:0019901">
    <property type="term" value="F:protein kinase binding"/>
    <property type="evidence" value="ECO:0000250"/>
    <property type="project" value="UniProtKB"/>
</dbReference>
<dbReference type="GO" id="GO:0019887">
    <property type="term" value="F:protein kinase regulator activity"/>
    <property type="evidence" value="ECO:0000304"/>
    <property type="project" value="RGD"/>
</dbReference>
<dbReference type="GO" id="GO:0030292">
    <property type="term" value="F:protein tyrosine kinase inhibitor activity"/>
    <property type="evidence" value="ECO:0000266"/>
    <property type="project" value="RGD"/>
</dbReference>
<dbReference type="GO" id="GO:0004725">
    <property type="term" value="F:protein tyrosine phosphatase activity"/>
    <property type="evidence" value="ECO:0000316"/>
    <property type="project" value="ARUK-UCL"/>
</dbReference>
<dbReference type="GO" id="GO:0005102">
    <property type="term" value="F:signaling receptor binding"/>
    <property type="evidence" value="ECO:0000266"/>
    <property type="project" value="RGD"/>
</dbReference>
<dbReference type="GO" id="GO:0030507">
    <property type="term" value="F:spectrin binding"/>
    <property type="evidence" value="ECO:0000266"/>
    <property type="project" value="RGD"/>
</dbReference>
<dbReference type="GO" id="GO:0005001">
    <property type="term" value="F:transmembrane receptor protein tyrosine phosphatase activity"/>
    <property type="evidence" value="ECO:0000266"/>
    <property type="project" value="RGD"/>
</dbReference>
<dbReference type="GO" id="GO:0046633">
    <property type="term" value="P:alpha-beta T cell proliferation"/>
    <property type="evidence" value="ECO:0000266"/>
    <property type="project" value="RGD"/>
</dbReference>
<dbReference type="GO" id="GO:0030183">
    <property type="term" value="P:B cell differentiation"/>
    <property type="evidence" value="ECO:0000266"/>
    <property type="project" value="RGD"/>
</dbReference>
<dbReference type="GO" id="GO:0042100">
    <property type="term" value="P:B cell proliferation"/>
    <property type="evidence" value="ECO:0000250"/>
    <property type="project" value="UniProtKB"/>
</dbReference>
<dbReference type="GO" id="GO:0050853">
    <property type="term" value="P:B cell receptor signaling pathway"/>
    <property type="evidence" value="ECO:0000250"/>
    <property type="project" value="UniProtKB"/>
</dbReference>
<dbReference type="GO" id="GO:0048539">
    <property type="term" value="P:bone marrow development"/>
    <property type="evidence" value="ECO:0000266"/>
    <property type="project" value="RGD"/>
</dbReference>
<dbReference type="GO" id="GO:0044770">
    <property type="term" value="P:cell cycle phase transition"/>
    <property type="evidence" value="ECO:0000266"/>
    <property type="project" value="RGD"/>
</dbReference>
<dbReference type="GO" id="GO:0051607">
    <property type="term" value="P:defense response to virus"/>
    <property type="evidence" value="ECO:0000250"/>
    <property type="project" value="UniProtKB"/>
</dbReference>
<dbReference type="GO" id="GO:0016311">
    <property type="term" value="P:dephosphorylation"/>
    <property type="evidence" value="ECO:0000250"/>
    <property type="project" value="UniProtKB"/>
</dbReference>
<dbReference type="GO" id="GO:0097191">
    <property type="term" value="P:extrinsic apoptotic signaling pathway"/>
    <property type="evidence" value="ECO:0000266"/>
    <property type="project" value="RGD"/>
</dbReference>
<dbReference type="GO" id="GO:0042492">
    <property type="term" value="P:gamma-delta T cell differentiation"/>
    <property type="evidence" value="ECO:0000266"/>
    <property type="project" value="RGD"/>
</dbReference>
<dbReference type="GO" id="GO:0002244">
    <property type="term" value="P:hematopoietic progenitor cell differentiation"/>
    <property type="evidence" value="ECO:0000266"/>
    <property type="project" value="RGD"/>
</dbReference>
<dbReference type="GO" id="GO:0034113">
    <property type="term" value="P:heterotypic cell-cell adhesion"/>
    <property type="evidence" value="ECO:0000266"/>
    <property type="project" value="RGD"/>
</dbReference>
<dbReference type="GO" id="GO:0007159">
    <property type="term" value="P:leukocyte cell-cell adhesion"/>
    <property type="evidence" value="ECO:0000266"/>
    <property type="project" value="RGD"/>
</dbReference>
<dbReference type="GO" id="GO:0000165">
    <property type="term" value="P:MAPK cascade"/>
    <property type="evidence" value="ECO:0000266"/>
    <property type="project" value="RGD"/>
</dbReference>
<dbReference type="GO" id="GO:0001779">
    <property type="term" value="P:natural killer cell differentiation"/>
    <property type="evidence" value="ECO:0000266"/>
    <property type="project" value="RGD"/>
</dbReference>
<dbReference type="GO" id="GO:0006933">
    <property type="term" value="P:negative regulation of cell adhesion involved in substrate-bound cell migration"/>
    <property type="evidence" value="ECO:0000266"/>
    <property type="project" value="RGD"/>
</dbReference>
<dbReference type="GO" id="GO:0001960">
    <property type="term" value="P:negative regulation of cytokine-mediated signaling pathway"/>
    <property type="evidence" value="ECO:0000250"/>
    <property type="project" value="UniProtKB"/>
</dbReference>
<dbReference type="GO" id="GO:0070373">
    <property type="term" value="P:negative regulation of ERK1 and ERK2 cascade"/>
    <property type="evidence" value="ECO:0000266"/>
    <property type="project" value="RGD"/>
</dbReference>
<dbReference type="GO" id="GO:0032703">
    <property type="term" value="P:negative regulation of interleukin-2 production"/>
    <property type="evidence" value="ECO:0000266"/>
    <property type="project" value="RGD"/>
</dbReference>
<dbReference type="GO" id="GO:1902215">
    <property type="term" value="P:negative regulation of interleukin-4-mediated signaling pathway"/>
    <property type="evidence" value="ECO:0000266"/>
    <property type="project" value="RGD"/>
</dbReference>
<dbReference type="GO" id="GO:0006469">
    <property type="term" value="P:negative regulation of protein kinase activity"/>
    <property type="evidence" value="ECO:0000250"/>
    <property type="project" value="UniProtKB"/>
</dbReference>
<dbReference type="GO" id="GO:0046426">
    <property type="term" value="P:negative regulation of receptor signaling pathway via JAK-STAT"/>
    <property type="evidence" value="ECO:0000266"/>
    <property type="project" value="RGD"/>
</dbReference>
<dbReference type="GO" id="GO:0001915">
    <property type="term" value="P:negative regulation of T cell mediated cytotoxicity"/>
    <property type="evidence" value="ECO:0000250"/>
    <property type="project" value="UniProtKB"/>
</dbReference>
<dbReference type="GO" id="GO:0000122">
    <property type="term" value="P:negative regulation of transcription by RNA polymerase II"/>
    <property type="evidence" value="ECO:0000266"/>
    <property type="project" value="RGD"/>
</dbReference>
<dbReference type="GO" id="GO:0045060">
    <property type="term" value="P:negative thymic T cell selection"/>
    <property type="evidence" value="ECO:0000266"/>
    <property type="project" value="RGD"/>
</dbReference>
<dbReference type="GO" id="GO:0044855">
    <property type="term" value="P:plasma membrane raft distribution"/>
    <property type="evidence" value="ECO:0000266"/>
    <property type="project" value="RGD"/>
</dbReference>
<dbReference type="GO" id="GO:0046641">
    <property type="term" value="P:positive regulation of alpha-beta T cell proliferation"/>
    <property type="evidence" value="ECO:0000266"/>
    <property type="project" value="RGD"/>
</dbReference>
<dbReference type="GO" id="GO:0050857">
    <property type="term" value="P:positive regulation of antigen receptor-mediated signaling pathway"/>
    <property type="evidence" value="ECO:0000250"/>
    <property type="project" value="UniProtKB"/>
</dbReference>
<dbReference type="GO" id="GO:0030890">
    <property type="term" value="P:positive regulation of B cell proliferation"/>
    <property type="evidence" value="ECO:0000266"/>
    <property type="project" value="RGD"/>
</dbReference>
<dbReference type="GO" id="GO:0050850">
    <property type="term" value="P:positive regulation of calcium-mediated signaling"/>
    <property type="evidence" value="ECO:0000266"/>
    <property type="project" value="RGD"/>
</dbReference>
<dbReference type="GO" id="GO:0070374">
    <property type="term" value="P:positive regulation of ERK1 and ERK2 cascade"/>
    <property type="evidence" value="ECO:0000266"/>
    <property type="project" value="RGD"/>
</dbReference>
<dbReference type="GO" id="GO:2001238">
    <property type="term" value="P:positive regulation of extrinsic apoptotic signaling pathway"/>
    <property type="evidence" value="ECO:0000266"/>
    <property type="project" value="RGD"/>
</dbReference>
<dbReference type="GO" id="GO:0060369">
    <property type="term" value="P:positive regulation of Fc receptor mediated stimulatory signaling pathway"/>
    <property type="evidence" value="ECO:0000266"/>
    <property type="project" value="RGD"/>
</dbReference>
<dbReference type="GO" id="GO:0045588">
    <property type="term" value="P:positive regulation of gamma-delta T cell differentiation"/>
    <property type="evidence" value="ECO:0000266"/>
    <property type="project" value="RGD"/>
</dbReference>
<dbReference type="GO" id="GO:2000473">
    <property type="term" value="P:positive regulation of hematopoietic stem cell migration"/>
    <property type="evidence" value="ECO:0000266"/>
    <property type="project" value="RGD"/>
</dbReference>
<dbReference type="GO" id="GO:0002925">
    <property type="term" value="P:positive regulation of humoral immune response mediated by circulating immunoglobulin"/>
    <property type="evidence" value="ECO:0000266"/>
    <property type="project" value="RGD"/>
</dbReference>
<dbReference type="GO" id="GO:0002639">
    <property type="term" value="P:positive regulation of immunoglobulin production"/>
    <property type="evidence" value="ECO:0000266"/>
    <property type="project" value="RGD"/>
</dbReference>
<dbReference type="GO" id="GO:0032743">
    <property type="term" value="P:positive regulation of interleukin-2 production"/>
    <property type="evidence" value="ECO:0000266"/>
    <property type="project" value="RGD"/>
</dbReference>
<dbReference type="GO" id="GO:0048304">
    <property type="term" value="P:positive regulation of isotype switching to IgG isotypes"/>
    <property type="evidence" value="ECO:0000266"/>
    <property type="project" value="RGD"/>
</dbReference>
<dbReference type="GO" id="GO:0043410">
    <property type="term" value="P:positive regulation of MAPK cascade"/>
    <property type="evidence" value="ECO:0000266"/>
    <property type="project" value="RGD"/>
</dbReference>
<dbReference type="GO" id="GO:0050766">
    <property type="term" value="P:positive regulation of phagocytosis"/>
    <property type="evidence" value="ECO:0000266"/>
    <property type="project" value="RGD"/>
</dbReference>
<dbReference type="GO" id="GO:2000648">
    <property type="term" value="P:positive regulation of stem cell proliferation"/>
    <property type="evidence" value="ECO:0000266"/>
    <property type="project" value="RGD"/>
</dbReference>
<dbReference type="GO" id="GO:0045582">
    <property type="term" value="P:positive regulation of T cell differentiation"/>
    <property type="evidence" value="ECO:0000266"/>
    <property type="project" value="RGD"/>
</dbReference>
<dbReference type="GO" id="GO:0001916">
    <property type="term" value="P:positive regulation of T cell mediated cytotoxicity"/>
    <property type="evidence" value="ECO:0000266"/>
    <property type="project" value="RGD"/>
</dbReference>
<dbReference type="GO" id="GO:0002711">
    <property type="term" value="P:positive regulation of T cell mediated immunity"/>
    <property type="evidence" value="ECO:0000266"/>
    <property type="project" value="RGD"/>
</dbReference>
<dbReference type="GO" id="GO:0042102">
    <property type="term" value="P:positive regulation of T cell proliferation"/>
    <property type="evidence" value="ECO:0000250"/>
    <property type="project" value="UniProtKB"/>
</dbReference>
<dbReference type="GO" id="GO:0032760">
    <property type="term" value="P:positive regulation of tumor necrosis factor production"/>
    <property type="evidence" value="ECO:0000266"/>
    <property type="project" value="RGD"/>
</dbReference>
<dbReference type="GO" id="GO:0045059">
    <property type="term" value="P:positive thymic T cell selection"/>
    <property type="evidence" value="ECO:0000266"/>
    <property type="project" value="RGD"/>
</dbReference>
<dbReference type="GO" id="GO:0006470">
    <property type="term" value="P:protein dephosphorylation"/>
    <property type="evidence" value="ECO:0000250"/>
    <property type="project" value="UniProtKB"/>
</dbReference>
<dbReference type="GO" id="GO:0051726">
    <property type="term" value="P:regulation of cell cycle"/>
    <property type="evidence" value="ECO:0000250"/>
    <property type="project" value="UniProtKB"/>
</dbReference>
<dbReference type="GO" id="GO:2001236">
    <property type="term" value="P:regulation of extrinsic apoptotic signaling pathway"/>
    <property type="evidence" value="ECO:0000266"/>
    <property type="project" value="RGD"/>
</dbReference>
<dbReference type="GO" id="GO:0010468">
    <property type="term" value="P:regulation of gene expression"/>
    <property type="evidence" value="ECO:0000316"/>
    <property type="project" value="ARUK-UCL"/>
</dbReference>
<dbReference type="GO" id="GO:0002923">
    <property type="term" value="P:regulation of humoral immune response mediated by circulating immunoglobulin"/>
    <property type="evidence" value="ECO:0000266"/>
    <property type="project" value="RGD"/>
</dbReference>
<dbReference type="GO" id="GO:0032677">
    <property type="term" value="P:regulation of interleukin-8 production"/>
    <property type="evidence" value="ECO:0000266"/>
    <property type="project" value="RGD"/>
</dbReference>
<dbReference type="GO" id="GO:0050764">
    <property type="term" value="P:regulation of phagocytosis"/>
    <property type="evidence" value="ECO:0000266"/>
    <property type="project" value="RGD"/>
</dbReference>
<dbReference type="GO" id="GO:0050856">
    <property type="term" value="P:regulation of T cell receptor signaling pathway"/>
    <property type="evidence" value="ECO:0000266"/>
    <property type="project" value="RGD"/>
</dbReference>
<dbReference type="GO" id="GO:0051209">
    <property type="term" value="P:release of sequestered calcium ion into cytosol"/>
    <property type="evidence" value="ECO:0000250"/>
    <property type="project" value="UniProtKB"/>
</dbReference>
<dbReference type="GO" id="GO:1904044">
    <property type="term" value="P:response to aldosterone"/>
    <property type="evidence" value="ECO:0000270"/>
    <property type="project" value="RGD"/>
</dbReference>
<dbReference type="GO" id="GO:0010332">
    <property type="term" value="P:response to gamma radiation"/>
    <property type="evidence" value="ECO:0000314"/>
    <property type="project" value="RGD"/>
</dbReference>
<dbReference type="GO" id="GO:0007165">
    <property type="term" value="P:signal transduction"/>
    <property type="evidence" value="ECO:0000318"/>
    <property type="project" value="GO_Central"/>
</dbReference>
<dbReference type="GO" id="GO:0048864">
    <property type="term" value="P:stem cell development"/>
    <property type="evidence" value="ECO:0000266"/>
    <property type="project" value="RGD"/>
</dbReference>
<dbReference type="GO" id="GO:0030217">
    <property type="term" value="P:T cell differentiation"/>
    <property type="evidence" value="ECO:0000250"/>
    <property type="project" value="UniProtKB"/>
</dbReference>
<dbReference type="GO" id="GO:0042098">
    <property type="term" value="P:T cell proliferation"/>
    <property type="evidence" value="ECO:0000266"/>
    <property type="project" value="RGD"/>
</dbReference>
<dbReference type="GO" id="GO:0050852">
    <property type="term" value="P:T cell receptor signaling pathway"/>
    <property type="evidence" value="ECO:0000316"/>
    <property type="project" value="ARUK-UCL"/>
</dbReference>
<dbReference type="CDD" id="cd00063">
    <property type="entry name" value="FN3"/>
    <property type="match status" value="2"/>
</dbReference>
<dbReference type="CDD" id="cd14558">
    <property type="entry name" value="R-PTP-C-2"/>
    <property type="match status" value="1"/>
</dbReference>
<dbReference type="CDD" id="cd14557">
    <property type="entry name" value="R-PTPc-C-1"/>
    <property type="match status" value="1"/>
</dbReference>
<dbReference type="FunFam" id="2.60.40.10:FF:001462">
    <property type="entry name" value="Receptor-type tyrosine-protein phosphatase C"/>
    <property type="match status" value="1"/>
</dbReference>
<dbReference type="FunFam" id="2.60.40.10:FF:003346">
    <property type="entry name" value="Receptor-type tyrosine-protein phosphatase C"/>
    <property type="match status" value="1"/>
</dbReference>
<dbReference type="FunFam" id="3.90.190.10:FF:000033">
    <property type="entry name" value="receptor-type tyrosine-protein phosphatase C isoform X1"/>
    <property type="match status" value="1"/>
</dbReference>
<dbReference type="FunFam" id="3.90.190.10:FF:000042">
    <property type="entry name" value="receptor-type tyrosine-protein phosphatase C isoform X1"/>
    <property type="match status" value="1"/>
</dbReference>
<dbReference type="Gene3D" id="2.60.40.10">
    <property type="entry name" value="Immunoglobulins"/>
    <property type="match status" value="2"/>
</dbReference>
<dbReference type="Gene3D" id="3.90.190.10">
    <property type="entry name" value="Protein tyrosine phosphatase superfamily"/>
    <property type="match status" value="2"/>
</dbReference>
<dbReference type="InterPro" id="IPR003961">
    <property type="entry name" value="FN3_dom"/>
</dbReference>
<dbReference type="InterPro" id="IPR036116">
    <property type="entry name" value="FN3_sf"/>
</dbReference>
<dbReference type="InterPro" id="IPR013783">
    <property type="entry name" value="Ig-like_fold"/>
</dbReference>
<dbReference type="InterPro" id="IPR029021">
    <property type="entry name" value="Prot-tyrosine_phosphatase-like"/>
</dbReference>
<dbReference type="InterPro" id="IPR050348">
    <property type="entry name" value="Protein-Tyr_Phosphatase"/>
</dbReference>
<dbReference type="InterPro" id="IPR000242">
    <property type="entry name" value="PTP_cat"/>
</dbReference>
<dbReference type="InterPro" id="IPR024739">
    <property type="entry name" value="PTP_recept_N"/>
</dbReference>
<dbReference type="InterPro" id="IPR016335">
    <property type="entry name" value="Ptprc"/>
</dbReference>
<dbReference type="InterPro" id="IPR016130">
    <property type="entry name" value="Tyr_Pase_AS"/>
</dbReference>
<dbReference type="InterPro" id="IPR003595">
    <property type="entry name" value="Tyr_Pase_cat"/>
</dbReference>
<dbReference type="InterPro" id="IPR000387">
    <property type="entry name" value="Tyr_Pase_dom"/>
</dbReference>
<dbReference type="PANTHER" id="PTHR19134">
    <property type="entry name" value="RECEPTOR-TYPE TYROSINE-PROTEIN PHOSPHATASE"/>
    <property type="match status" value="1"/>
</dbReference>
<dbReference type="PANTHER" id="PTHR19134:SF539">
    <property type="entry name" value="RECEPTOR-TYPE TYROSINE-PROTEIN PHOSPHATASE C"/>
    <property type="match status" value="1"/>
</dbReference>
<dbReference type="Pfam" id="PF12567">
    <property type="entry name" value="CD45"/>
    <property type="match status" value="1"/>
</dbReference>
<dbReference type="Pfam" id="PF00041">
    <property type="entry name" value="fn3"/>
    <property type="match status" value="2"/>
</dbReference>
<dbReference type="Pfam" id="PF12453">
    <property type="entry name" value="PTP_N"/>
    <property type="match status" value="1"/>
</dbReference>
<dbReference type="Pfam" id="PF00102">
    <property type="entry name" value="Y_phosphatase"/>
    <property type="match status" value="2"/>
</dbReference>
<dbReference type="PIRSF" id="PIRSF002004">
    <property type="entry name" value="Leukocyte_common_antigen"/>
    <property type="match status" value="1"/>
</dbReference>
<dbReference type="PRINTS" id="PR00700">
    <property type="entry name" value="PRTYPHPHTASE"/>
</dbReference>
<dbReference type="SMART" id="SM00060">
    <property type="entry name" value="FN3"/>
    <property type="match status" value="2"/>
</dbReference>
<dbReference type="SMART" id="SM00194">
    <property type="entry name" value="PTPc"/>
    <property type="match status" value="2"/>
</dbReference>
<dbReference type="SMART" id="SM00404">
    <property type="entry name" value="PTPc_motif"/>
    <property type="match status" value="2"/>
</dbReference>
<dbReference type="SUPFAM" id="SSF52799">
    <property type="entry name" value="(Phosphotyrosine protein) phosphatases II"/>
    <property type="match status" value="2"/>
</dbReference>
<dbReference type="SUPFAM" id="SSF49265">
    <property type="entry name" value="Fibronectin type III"/>
    <property type="match status" value="1"/>
</dbReference>
<dbReference type="PROSITE" id="PS50853">
    <property type="entry name" value="FN3"/>
    <property type="match status" value="2"/>
</dbReference>
<dbReference type="PROSITE" id="PS00383">
    <property type="entry name" value="TYR_PHOSPHATASE_1"/>
    <property type="match status" value="1"/>
</dbReference>
<dbReference type="PROSITE" id="PS50056">
    <property type="entry name" value="TYR_PHOSPHATASE_2"/>
    <property type="match status" value="2"/>
</dbReference>
<dbReference type="PROSITE" id="PS50055">
    <property type="entry name" value="TYR_PHOSPHATASE_PTP"/>
    <property type="match status" value="2"/>
</dbReference>
<name>PTPRC_RAT</name>
<gene>
    <name type="primary">Ptprc</name>
</gene>
<organism>
    <name type="scientific">Rattus norvegicus</name>
    <name type="common">Rat</name>
    <dbReference type="NCBI Taxonomy" id="10116"/>
    <lineage>
        <taxon>Eukaryota</taxon>
        <taxon>Metazoa</taxon>
        <taxon>Chordata</taxon>
        <taxon>Craniata</taxon>
        <taxon>Vertebrata</taxon>
        <taxon>Euteleostomi</taxon>
        <taxon>Mammalia</taxon>
        <taxon>Eutheria</taxon>
        <taxon>Euarchontoglires</taxon>
        <taxon>Glires</taxon>
        <taxon>Rodentia</taxon>
        <taxon>Myomorpha</taxon>
        <taxon>Muroidea</taxon>
        <taxon>Muridae</taxon>
        <taxon>Murinae</taxon>
        <taxon>Rattus</taxon>
    </lineage>
</organism>
<comment type="function">
    <text evidence="1 3">Protein tyrosine-protein phosphatase required for T-cell activation through the antigen receptor. Acts as a positive regulator of T-cell coactivation upon binding to DPP4. The first PTPase domain has enzymatic activity, while the second one seems to affect the substrate specificity of the first one. Upon T-cell activation, recruits and dephosphorylates SKAP1 and FYN (By similarity). Dephosphorylates LYN, and thereby modulates LYN activity (By similarity). Interacts with CLEC10A at antigen presenting cell-T cell contact; CLEC10A on immature dendritic cells recognizes Tn antigen-carrying PTPRC/CD45 receptor on effector T cells and modulates T cell activation threshold to limit autoreactivity.</text>
</comment>
<comment type="catalytic activity">
    <reaction evidence="7">
        <text>O-phospho-L-tyrosyl-[protein] + H2O = L-tyrosyl-[protein] + phosphate</text>
        <dbReference type="Rhea" id="RHEA:10684"/>
        <dbReference type="Rhea" id="RHEA-COMP:10136"/>
        <dbReference type="Rhea" id="RHEA-COMP:20101"/>
        <dbReference type="ChEBI" id="CHEBI:15377"/>
        <dbReference type="ChEBI" id="CHEBI:43474"/>
        <dbReference type="ChEBI" id="CHEBI:46858"/>
        <dbReference type="ChEBI" id="CHEBI:61978"/>
        <dbReference type="EC" id="3.1.3.48"/>
    </reaction>
</comment>
<comment type="subunit">
    <text evidence="2 3">Interacts with SKAP1. Interacts with DPP4; the interaction is enhanced in an interleukin-12-dependent manner in activated lymphocytes. Binds GANAB and PRKCSH (By similarity). Interacts with CD53; this interaction stabilizes PTPRC on the membrane and is required for optimal phosphatase activity (By similarity). Interacts with CLEC10A.</text>
</comment>
<comment type="subcellular location">
    <subcellularLocation>
        <location evidence="3">Cell membrane</location>
        <topology evidence="4">Single-pass type I membrane protein</topology>
    </subcellularLocation>
    <subcellularLocation>
        <location evidence="3">Membrane raft</location>
    </subcellularLocation>
    <subcellularLocation>
        <location evidence="3">Synapse</location>
    </subcellularLocation>
    <text evidence="3">Colocalized with DPP4 in membrane rafts.</text>
</comment>
<comment type="alternative products">
    <event type="alternative splicing"/>
    <isoform>
        <id>P04157-1</id>
        <name>1</name>
        <name>L-CA variant 4</name>
        <sequence type="displayed"/>
    </isoform>
    <isoform>
        <id>P04157-2</id>
        <name>2</name>
        <name>L-CA variant 1</name>
        <sequence type="described" ref="VSP_005167"/>
    </isoform>
    <isoform>
        <id>P04157-3</id>
        <name>3</name>
        <name>L-CA variant 2</name>
        <sequence type="described" ref="VSP_005166"/>
    </isoform>
    <isoform>
        <id>P04157-4</id>
        <name>4</name>
        <name>L-CA variant 3</name>
        <sequence type="described" ref="VSP_005165 VSP_005168"/>
    </isoform>
    <isoform>
        <id>P04157-5</id>
        <name>5</name>
        <sequence type="described" ref="VSP_026163"/>
    </isoform>
    <text>Additional isoforms seem to exist.</text>
</comment>
<comment type="tissue specificity">
    <text>Isoform 1 and isoform 2 are found in thymocyte and lymph node. Isoform 4 and isoform 3 are found in the lymph nod.</text>
</comment>
<comment type="domain">
    <text evidence="1">The first PTPase domain interacts with SKAP1.</text>
</comment>
<comment type="PTM">
    <text>Heavily N- and O-glycosylated.</text>
</comment>
<comment type="PTM">
    <text>The cytoplasmic domain contains potential phosphorylation sites.</text>
</comment>
<comment type="similarity">
    <text evidence="12">Belongs to the protein-tyrosine phosphatase family. Receptor class 1/6 subfamily.</text>
</comment>
<evidence type="ECO:0000250" key="1"/>
<evidence type="ECO:0000250" key="2">
    <source>
        <dbReference type="UniProtKB" id="P06800"/>
    </source>
</evidence>
<evidence type="ECO:0000250" key="3">
    <source>
        <dbReference type="UniProtKB" id="P08575"/>
    </source>
</evidence>
<evidence type="ECO:0000255" key="4"/>
<evidence type="ECO:0000255" key="5">
    <source>
        <dbReference type="PROSITE-ProRule" id="PRU00160"/>
    </source>
</evidence>
<evidence type="ECO:0000255" key="6">
    <source>
        <dbReference type="PROSITE-ProRule" id="PRU00316"/>
    </source>
</evidence>
<evidence type="ECO:0000255" key="7">
    <source>
        <dbReference type="PROSITE-ProRule" id="PRU10044"/>
    </source>
</evidence>
<evidence type="ECO:0000256" key="8">
    <source>
        <dbReference type="SAM" id="MobiDB-lite"/>
    </source>
</evidence>
<evidence type="ECO:0000303" key="9">
    <source>
    </source>
</evidence>
<evidence type="ECO:0000303" key="10">
    <source ref="1"/>
</evidence>
<evidence type="ECO:0000303" key="11">
    <source ref="3"/>
</evidence>
<evidence type="ECO:0000305" key="12"/>
<evidence type="ECO:0007744" key="13">
    <source>
    </source>
</evidence>
<evidence type="ECO:0007829" key="14">
    <source>
        <dbReference type="PDB" id="5FN8"/>
    </source>
</evidence>
<protein>
    <recommendedName>
        <fullName>Receptor-type tyrosine-protein phosphatase C</fullName>
        <ecNumber>3.1.3.48</ecNumber>
    </recommendedName>
    <alternativeName>
        <fullName>Leukocyte common antigen</fullName>
        <shortName>L-CA</shortName>
    </alternativeName>
    <alternativeName>
        <fullName>T200</fullName>
    </alternativeName>
    <cdAntigenName>CD45</cdAntigenName>
</protein>
<feature type="signal peptide">
    <location>
        <begin position="1"/>
        <end position="23"/>
    </location>
</feature>
<feature type="chain" id="PRO_0000025472" description="Receptor-type tyrosine-protein phosphatase C">
    <location>
        <begin position="24"/>
        <end position="1273"/>
    </location>
</feature>
<feature type="topological domain" description="Extracellular" evidence="4">
    <location>
        <begin position="24"/>
        <end position="546"/>
    </location>
</feature>
<feature type="transmembrane region" description="Helical" evidence="4">
    <location>
        <begin position="547"/>
        <end position="567"/>
    </location>
</feature>
<feature type="topological domain" description="Cytoplasmic" evidence="4">
    <location>
        <begin position="568"/>
        <end position="1273"/>
    </location>
</feature>
<feature type="domain" description="Fibronectin type-III 1" evidence="6">
    <location>
        <begin position="361"/>
        <end position="452"/>
    </location>
</feature>
<feature type="domain" description="Fibronectin type-III 2" evidence="6">
    <location>
        <begin position="453"/>
        <end position="545"/>
    </location>
</feature>
<feature type="domain" description="Tyrosine-protein phosphatase 1" evidence="5">
    <location>
        <begin position="622"/>
        <end position="881"/>
    </location>
</feature>
<feature type="domain" description="Tyrosine-protein phosphatase 2" evidence="5">
    <location>
        <begin position="913"/>
        <end position="1196"/>
    </location>
</feature>
<feature type="region of interest" description="Disordered" evidence="8">
    <location>
        <begin position="45"/>
        <end position="192"/>
    </location>
</feature>
<feature type="region of interest" description="Disordered" evidence="8">
    <location>
        <begin position="960"/>
        <end position="984"/>
    </location>
</feature>
<feature type="region of interest" description="Disordered" evidence="8">
    <location>
        <begin position="1219"/>
        <end position="1273"/>
    </location>
</feature>
<feature type="compositionally biased region" description="Polar residues" evidence="8">
    <location>
        <begin position="50"/>
        <end position="77"/>
    </location>
</feature>
<feature type="compositionally biased region" description="Polar residues" evidence="8">
    <location>
        <begin position="84"/>
        <end position="111"/>
    </location>
</feature>
<feature type="compositionally biased region" description="Polar residues" evidence="8">
    <location>
        <begin position="141"/>
        <end position="192"/>
    </location>
</feature>
<feature type="compositionally biased region" description="Acidic residues" evidence="8">
    <location>
        <begin position="968"/>
        <end position="981"/>
    </location>
</feature>
<feature type="active site" description="Phosphocysteine intermediate" evidence="1">
    <location>
        <position position="822"/>
    </location>
</feature>
<feature type="active site" description="Phosphocysteine intermediate" evidence="1">
    <location>
        <position position="1137"/>
    </location>
</feature>
<feature type="binding site" evidence="1">
    <location>
        <position position="790"/>
    </location>
    <ligand>
        <name>substrate</name>
    </ligand>
</feature>
<feature type="binding site" evidence="1">
    <location>
        <begin position="822"/>
        <end position="828"/>
    </location>
    <ligand>
        <name>substrate</name>
    </ligand>
</feature>
<feature type="binding site" evidence="1">
    <location>
        <position position="866"/>
    </location>
    <ligand>
        <name>substrate</name>
    </ligand>
</feature>
<feature type="modified residue" description="Phosphotyrosine" evidence="13">
    <location>
        <position position="652"/>
    </location>
</feature>
<feature type="modified residue" description="Phosphoserine" evidence="3">
    <location>
        <position position="944"/>
    </location>
</feature>
<feature type="modified residue" description="Phosphoserine" evidence="13">
    <location>
        <position position="963"/>
    </location>
</feature>
<feature type="modified residue" description="Phosphoserine" evidence="13">
    <location>
        <position position="966"/>
    </location>
</feature>
<feature type="modified residue" description="Phosphoserine" evidence="13">
    <location>
        <position position="970"/>
    </location>
</feature>
<feature type="modified residue" description="Phosphoserine" evidence="13">
    <location>
        <position position="973"/>
    </location>
</feature>
<feature type="modified residue" description="Phosphoserine" evidence="13">
    <location>
        <position position="974"/>
    </location>
</feature>
<feature type="modified residue" description="Phosphoserine" evidence="13">
    <location>
        <position position="978"/>
    </location>
</feature>
<feature type="modified residue" description="Phosphoserine" evidence="13">
    <location>
        <position position="1209"/>
    </location>
</feature>
<feature type="modified residue" description="Phosphoserine" evidence="3">
    <location>
        <position position="1266"/>
    </location>
</feature>
<feature type="glycosylation site" description="N-linked (GlcNAc...) asparagine" evidence="4">
    <location>
        <position position="62"/>
    </location>
</feature>
<feature type="glycosylation site" description="N-linked (GlcNAc...) asparagine" evidence="4">
    <location>
        <position position="142"/>
    </location>
</feature>
<feature type="glycosylation site" description="N-linked (GlcNAc...) asparagine" evidence="4">
    <location>
        <position position="153"/>
    </location>
</feature>
<feature type="glycosylation site" description="N-linked (GlcNAc...) asparagine" evidence="4">
    <location>
        <position position="164"/>
    </location>
</feature>
<feature type="glycosylation site" description="N-linked (GlcNAc...) asparagine" evidence="4">
    <location>
        <position position="178"/>
    </location>
</feature>
<feature type="glycosylation site" description="N-linked (GlcNAc...) asparagine" evidence="4">
    <location>
        <position position="200"/>
    </location>
</feature>
<feature type="glycosylation site" description="N-linked (GlcNAc...) asparagine" evidence="4">
    <location>
        <position position="245"/>
    </location>
</feature>
<feature type="glycosylation site" description="N-linked (GlcNAc...) asparagine" evidence="4">
    <location>
        <position position="250"/>
    </location>
</feature>
<feature type="glycosylation site" description="N-linked (GlcNAc...) asparagine" evidence="4">
    <location>
        <position position="271"/>
    </location>
</feature>
<feature type="glycosylation site" description="N-linked (GlcNAc...) asparagine" evidence="4">
    <location>
        <position position="282"/>
    </location>
</feature>
<feature type="glycosylation site" description="N-linked (GlcNAc...) asparagine" evidence="4">
    <location>
        <position position="327"/>
    </location>
</feature>
<feature type="glycosylation site" description="N-linked (GlcNAc...) asparagine" evidence="4">
    <location>
        <position position="333"/>
    </location>
</feature>
<feature type="glycosylation site" description="N-linked (GlcNAc...) asparagine" evidence="4">
    <location>
        <position position="371"/>
    </location>
</feature>
<feature type="glycosylation site" description="N-linked (GlcNAc...) asparagine" evidence="4">
    <location>
        <position position="374"/>
    </location>
</feature>
<feature type="glycosylation site" description="N-linked (GlcNAc...) asparagine" evidence="4">
    <location>
        <position position="471"/>
    </location>
</feature>
<feature type="glycosylation site" description="N-linked (GlcNAc...) asparagine" evidence="4">
    <location>
        <position position="502"/>
    </location>
</feature>
<feature type="splice variant" id="VSP_005167" description="In isoform 2." evidence="9">
    <location>
        <begin position="30"/>
        <end position="161"/>
    </location>
</feature>
<feature type="splice variant" id="VSP_005166" description="In isoform 3." evidence="9 11">
    <location>
        <begin position="30"/>
        <end position="120"/>
    </location>
</feature>
<feature type="splice variant" id="VSP_005165" description="In isoform 4." evidence="9 10 11">
    <location>
        <begin position="30"/>
        <end position="71"/>
    </location>
</feature>
<feature type="splice variant" id="VSP_026163" description="In isoform 5." evidence="11">
    <location>
        <begin position="72"/>
        <end position="161"/>
    </location>
</feature>
<feature type="splice variant" id="VSP_005168" description="In isoform 4." evidence="9 10 11">
    <location>
        <begin position="121"/>
        <end position="161"/>
    </location>
</feature>
<feature type="sequence conflict" description="In Ref. 3; AAA41518/AAA41521." evidence="12" ref="3">
    <original>S</original>
    <variation>R</variation>
    <location>
        <position position="56"/>
    </location>
</feature>
<feature type="strand" evidence="14">
    <location>
        <begin position="385"/>
        <end position="387"/>
    </location>
</feature>
<feature type="strand" evidence="14">
    <location>
        <begin position="423"/>
        <end position="426"/>
    </location>
</feature>
<feature type="strand" evidence="14">
    <location>
        <begin position="445"/>
        <end position="448"/>
    </location>
</feature>
<feature type="strand" evidence="14">
    <location>
        <begin position="458"/>
        <end position="464"/>
    </location>
</feature>
<feature type="strand" evidence="14">
    <location>
        <begin position="466"/>
        <end position="468"/>
    </location>
</feature>
<feature type="strand" evidence="14">
    <location>
        <begin position="470"/>
        <end position="475"/>
    </location>
</feature>
<feature type="strand" evidence="14">
    <location>
        <begin position="486"/>
        <end position="493"/>
    </location>
</feature>
<feature type="strand" evidence="14">
    <location>
        <begin position="496"/>
        <end position="510"/>
    </location>
</feature>
<feature type="strand" evidence="14">
    <location>
        <begin position="518"/>
        <end position="526"/>
    </location>
</feature>
<feature type="strand" evidence="14">
    <location>
        <begin position="535"/>
        <end position="540"/>
    </location>
</feature>
<reference key="1">
    <citation type="submission" date="2003-05" db="EMBL/GenBank/DDBJ databases">
        <title>Amgen rat EST program.</title>
        <authorList>
            <consortium name="Amgen EST program"/>
        </authorList>
    </citation>
    <scope>NUCLEOTIDE SEQUENCE [LARGE SCALE MRNA] OF 1-147 (ISOFORM 4)</scope>
</reference>
<reference key="2">
    <citation type="journal article" date="1987" name="EMBO J.">
        <title>Lymphocyte specific heterogeneity in the rat leucocyte common antigen (T200) is due to differences in polypeptide sequences near the NH2-terminus.</title>
        <authorList>
            <person name="Barclay A.N."/>
            <person name="Jackson D.I."/>
            <person name="Willis A.C."/>
            <person name="Williams A.F."/>
        </authorList>
    </citation>
    <scope>NUCLEOTIDE SEQUENCE [MRNA] OF 19-218 (ISOFORMS 1; 2; 3 AND 4)</scope>
</reference>
<reference key="3">
    <citation type="submission" date="1987-05" db="EMBL/GenBank/DDBJ databases">
        <authorList>
            <person name="Barclay A.N."/>
            <person name="Jackson D.I."/>
            <person name="Willis A.C."/>
            <person name="Williams A.F."/>
        </authorList>
    </citation>
    <scope>NUCLEOTIDE SEQUENCE [MRNA] OF 19-1273 (ISOFORMS 1; 3; 4 AND 5)</scope>
</reference>
<reference key="4">
    <citation type="journal article" date="1985" name="Cell">
        <title>Evidence from cDNA clones that the rat leukocyte-common antigen (T200) spans the lipid bilayer and contains a cytoplasmic domain of 80,000 Mr.</title>
        <authorList>
            <person name="Thomas M.L."/>
            <person name="Barclay A.N."/>
            <person name="Gagnon J."/>
            <person name="Williams A.F."/>
        </authorList>
    </citation>
    <scope>NUCLEOTIDE SEQUENCE [MRNA] OF 208-1255 (ISOFORM 1)</scope>
</reference>
<reference key="5">
    <citation type="journal article" date="2012" name="Nat. Commun.">
        <title>Quantitative maps of protein phosphorylation sites across 14 different rat organs and tissues.</title>
        <authorList>
            <person name="Lundby A."/>
            <person name="Secher A."/>
            <person name="Lage K."/>
            <person name="Nordsborg N.B."/>
            <person name="Dmytriyev A."/>
            <person name="Lundby C."/>
            <person name="Olsen J.V."/>
        </authorList>
    </citation>
    <scope>PHOSPHORYLATION [LARGE SCALE ANALYSIS] AT TYR-652; SER-963; SER-966; SER-970; SER-973; SER-974; SER-978 AND SER-1209</scope>
    <scope>IDENTIFICATION BY MASS SPECTROMETRY [LARGE SCALE ANALYSIS]</scope>
</reference>
<accession>P04157</accession>
<proteinExistence type="evidence at protein level"/>